<protein>
    <recommendedName>
        <fullName evidence="11">Nitric oxide synthase 3</fullName>
        <ecNumber evidence="3">1.14.13.39</ecNumber>
    </recommendedName>
    <alternativeName>
        <fullName>Constitutive NOS</fullName>
        <shortName>cNOS</shortName>
    </alternativeName>
    <alternativeName>
        <fullName>EC-NOS</fullName>
    </alternativeName>
    <alternativeName>
        <fullName>NOS type III</fullName>
        <shortName>NOSIII</shortName>
    </alternativeName>
    <alternativeName>
        <fullName evidence="11">Nitric oxide synthase, endothelial</fullName>
        <shortName evidence="11">Endothelial NOS</shortName>
        <shortName evidence="11">eNOS</shortName>
    </alternativeName>
</protein>
<name>NOS3_CANLF</name>
<gene>
    <name type="primary">NOS3</name>
    <name type="synonym">NOS</name>
</gene>
<proteinExistence type="evidence at transcript level"/>
<keyword id="KW-0106">Calcium</keyword>
<keyword id="KW-0112">Calmodulin-binding</keyword>
<keyword id="KW-1003">Cell membrane</keyword>
<keyword id="KW-0963">Cytoplasm</keyword>
<keyword id="KW-0206">Cytoskeleton</keyword>
<keyword id="KW-0274">FAD</keyword>
<keyword id="KW-0285">Flavoprotein</keyword>
<keyword id="KW-0288">FMN</keyword>
<keyword id="KW-0333">Golgi apparatus</keyword>
<keyword id="KW-0349">Heme</keyword>
<keyword id="KW-0408">Iron</keyword>
<keyword id="KW-0449">Lipoprotein</keyword>
<keyword id="KW-0472">Membrane</keyword>
<keyword id="KW-0479">Metal-binding</keyword>
<keyword id="KW-0519">Myristate</keyword>
<keyword id="KW-0521">NADP</keyword>
<keyword id="KW-0560">Oxidoreductase</keyword>
<keyword id="KW-0564">Palmitate</keyword>
<keyword id="KW-0597">Phosphoprotein</keyword>
<keyword id="KW-1185">Reference proteome</keyword>
<keyword id="KW-0862">Zinc</keyword>
<accession>Q9TUX8</accession>
<reference key="1">
    <citation type="journal article" date="1999" name="Nitric Oxide">
        <title>Assembly and characterization of canine heart endothelial nitric oxide synthase cDNA and 5'-flanking sequence by homology (RT-)PCR cloning.</title>
        <authorList>
            <person name="Schwemmer M."/>
            <person name="Bassenge E."/>
        </authorList>
    </citation>
    <scope>NUCLEOTIDE SEQUENCE [MRNA]</scope>
    <source>
        <tissue>Heart</tissue>
    </source>
</reference>
<dbReference type="EC" id="1.14.13.39" evidence="3"/>
<dbReference type="EMBL" id="AF143503">
    <property type="protein sequence ID" value="AAD52161.1"/>
    <property type="molecule type" value="mRNA"/>
</dbReference>
<dbReference type="BMRB" id="Q9TUX8"/>
<dbReference type="SMR" id="Q9TUX8"/>
<dbReference type="FunCoup" id="Q9TUX8">
    <property type="interactions" value="25"/>
</dbReference>
<dbReference type="STRING" id="9615.ENSCAFP00000061234"/>
<dbReference type="PaxDb" id="9612-ENSCAFP00000006985"/>
<dbReference type="eggNOG" id="KOG1158">
    <property type="taxonomic scope" value="Eukaryota"/>
</dbReference>
<dbReference type="InParanoid" id="Q9TUX8"/>
<dbReference type="Proteomes" id="UP000002254">
    <property type="component" value="Unplaced"/>
</dbReference>
<dbReference type="Proteomes" id="UP000694429">
    <property type="component" value="Unplaced"/>
</dbReference>
<dbReference type="Proteomes" id="UP000694542">
    <property type="component" value="Unplaced"/>
</dbReference>
<dbReference type="Proteomes" id="UP000805418">
    <property type="component" value="Unplaced"/>
</dbReference>
<dbReference type="GO" id="GO:0005901">
    <property type="term" value="C:caveola"/>
    <property type="evidence" value="ECO:0007669"/>
    <property type="project" value="UniProtKB-SubCell"/>
</dbReference>
<dbReference type="GO" id="GO:0005856">
    <property type="term" value="C:cytoskeleton"/>
    <property type="evidence" value="ECO:0007669"/>
    <property type="project" value="UniProtKB-SubCell"/>
</dbReference>
<dbReference type="GO" id="GO:0005829">
    <property type="term" value="C:cytosol"/>
    <property type="evidence" value="ECO:0000318"/>
    <property type="project" value="GO_Central"/>
</dbReference>
<dbReference type="GO" id="GO:0005794">
    <property type="term" value="C:Golgi apparatus"/>
    <property type="evidence" value="ECO:0007669"/>
    <property type="project" value="UniProtKB-SubCell"/>
</dbReference>
<dbReference type="GO" id="GO:0005634">
    <property type="term" value="C:nucleus"/>
    <property type="evidence" value="ECO:0000318"/>
    <property type="project" value="GO_Central"/>
</dbReference>
<dbReference type="GO" id="GO:0005886">
    <property type="term" value="C:plasma membrane"/>
    <property type="evidence" value="ECO:0000318"/>
    <property type="project" value="GO_Central"/>
</dbReference>
<dbReference type="GO" id="GO:0005516">
    <property type="term" value="F:calmodulin binding"/>
    <property type="evidence" value="ECO:0007669"/>
    <property type="project" value="UniProtKB-KW"/>
</dbReference>
<dbReference type="GO" id="GO:0050660">
    <property type="term" value="F:flavin adenine dinucleotide binding"/>
    <property type="evidence" value="ECO:0000318"/>
    <property type="project" value="GO_Central"/>
</dbReference>
<dbReference type="GO" id="GO:0010181">
    <property type="term" value="F:FMN binding"/>
    <property type="evidence" value="ECO:0000318"/>
    <property type="project" value="GO_Central"/>
</dbReference>
<dbReference type="GO" id="GO:0020037">
    <property type="term" value="F:heme binding"/>
    <property type="evidence" value="ECO:0007669"/>
    <property type="project" value="InterPro"/>
</dbReference>
<dbReference type="GO" id="GO:0046872">
    <property type="term" value="F:metal ion binding"/>
    <property type="evidence" value="ECO:0007669"/>
    <property type="project" value="UniProtKB-KW"/>
</dbReference>
<dbReference type="GO" id="GO:0050661">
    <property type="term" value="F:NADP binding"/>
    <property type="evidence" value="ECO:0007669"/>
    <property type="project" value="InterPro"/>
</dbReference>
<dbReference type="GO" id="GO:0004517">
    <property type="term" value="F:nitric-oxide synthase activity"/>
    <property type="evidence" value="ECO:0000318"/>
    <property type="project" value="GO_Central"/>
</dbReference>
<dbReference type="GO" id="GO:0006527">
    <property type="term" value="P:arginine catabolic process"/>
    <property type="evidence" value="ECO:0000318"/>
    <property type="project" value="GO_Central"/>
</dbReference>
<dbReference type="GO" id="GO:0045776">
    <property type="term" value="P:negative regulation of blood pressure"/>
    <property type="evidence" value="ECO:0000318"/>
    <property type="project" value="GO_Central"/>
</dbReference>
<dbReference type="GO" id="GO:0006809">
    <property type="term" value="P:nitric oxide biosynthetic process"/>
    <property type="evidence" value="ECO:0000318"/>
    <property type="project" value="GO_Central"/>
</dbReference>
<dbReference type="GO" id="GO:0007263">
    <property type="term" value="P:nitric oxide mediated signal transduction"/>
    <property type="evidence" value="ECO:0000318"/>
    <property type="project" value="GO_Central"/>
</dbReference>
<dbReference type="GO" id="GO:0009725">
    <property type="term" value="P:response to hormone"/>
    <property type="evidence" value="ECO:0000318"/>
    <property type="project" value="GO_Central"/>
</dbReference>
<dbReference type="GO" id="GO:0032496">
    <property type="term" value="P:response to lipopolysaccharide"/>
    <property type="evidence" value="ECO:0000318"/>
    <property type="project" value="GO_Central"/>
</dbReference>
<dbReference type="CDD" id="cd00795">
    <property type="entry name" value="NOS_oxygenase_euk"/>
    <property type="match status" value="1"/>
</dbReference>
<dbReference type="FunFam" id="3.90.440.10:FF:000001">
    <property type="entry name" value="Endothelial nitric oxide synthase"/>
    <property type="match status" value="1"/>
</dbReference>
<dbReference type="FunFam" id="1.20.990.10:FF:000005">
    <property type="entry name" value="Nitric oxide synthase"/>
    <property type="match status" value="1"/>
</dbReference>
<dbReference type="FunFam" id="3.40.50.360:FF:000003">
    <property type="entry name" value="Nitric oxide synthase"/>
    <property type="match status" value="1"/>
</dbReference>
<dbReference type="FunFam" id="3.40.50.80:FF:000003">
    <property type="entry name" value="Nitric oxide synthase"/>
    <property type="match status" value="1"/>
</dbReference>
<dbReference type="FunFam" id="3.90.1230.10:FF:000001">
    <property type="entry name" value="Nitric oxide synthase, brain"/>
    <property type="match status" value="1"/>
</dbReference>
<dbReference type="Gene3D" id="3.40.50.360">
    <property type="match status" value="1"/>
</dbReference>
<dbReference type="Gene3D" id="1.20.990.10">
    <property type="entry name" value="NADPH-cytochrome p450 Reductase, Chain A, domain 3"/>
    <property type="match status" value="1"/>
</dbReference>
<dbReference type="Gene3D" id="3.90.340.10">
    <property type="entry name" value="Nitric Oxide Synthase, Chain A, domain 1"/>
    <property type="match status" value="1"/>
</dbReference>
<dbReference type="Gene3D" id="3.90.1230.10">
    <property type="entry name" value="Nitric Oxide Synthase, Chain A, domain 3"/>
    <property type="match status" value="1"/>
</dbReference>
<dbReference type="Gene3D" id="3.90.440.10">
    <property type="entry name" value="Nitric Oxide Synthase,Heme Domain,Chain A domain 2"/>
    <property type="match status" value="1"/>
</dbReference>
<dbReference type="Gene3D" id="3.40.50.80">
    <property type="entry name" value="Nucleotide-binding domain of ferredoxin-NADP reductase (FNR) module"/>
    <property type="match status" value="1"/>
</dbReference>
<dbReference type="Gene3D" id="2.40.30.10">
    <property type="entry name" value="Translation factors"/>
    <property type="match status" value="1"/>
</dbReference>
<dbReference type="InterPro" id="IPR003097">
    <property type="entry name" value="CysJ-like_FAD-binding"/>
</dbReference>
<dbReference type="InterPro" id="IPR017927">
    <property type="entry name" value="FAD-bd_FR_type"/>
</dbReference>
<dbReference type="InterPro" id="IPR001094">
    <property type="entry name" value="Flavdoxin-like"/>
</dbReference>
<dbReference type="InterPro" id="IPR008254">
    <property type="entry name" value="Flavodoxin/NO_synth"/>
</dbReference>
<dbReference type="InterPro" id="IPR001709">
    <property type="entry name" value="Flavoprot_Pyr_Nucl_cyt_Rdtase"/>
</dbReference>
<dbReference type="InterPro" id="IPR029039">
    <property type="entry name" value="Flavoprotein-like_sf"/>
</dbReference>
<dbReference type="InterPro" id="IPR039261">
    <property type="entry name" value="FNR_nucleotide-bd"/>
</dbReference>
<dbReference type="InterPro" id="IPR023173">
    <property type="entry name" value="NADPH_Cyt_P450_Rdtase_alpha"/>
</dbReference>
<dbReference type="InterPro" id="IPR050607">
    <property type="entry name" value="NOS"/>
</dbReference>
<dbReference type="InterPro" id="IPR044943">
    <property type="entry name" value="NOS_dom_1"/>
</dbReference>
<dbReference type="InterPro" id="IPR044940">
    <property type="entry name" value="NOS_dom_2"/>
</dbReference>
<dbReference type="InterPro" id="IPR044944">
    <property type="entry name" value="NOS_dom_3"/>
</dbReference>
<dbReference type="InterPro" id="IPR012144">
    <property type="entry name" value="NOS_euk"/>
</dbReference>
<dbReference type="InterPro" id="IPR004030">
    <property type="entry name" value="NOS_N"/>
</dbReference>
<dbReference type="InterPro" id="IPR036119">
    <property type="entry name" value="NOS_N_sf"/>
</dbReference>
<dbReference type="InterPro" id="IPR001433">
    <property type="entry name" value="OxRdtase_FAD/NAD-bd"/>
</dbReference>
<dbReference type="InterPro" id="IPR017938">
    <property type="entry name" value="Riboflavin_synthase-like_b-brl"/>
</dbReference>
<dbReference type="PANTHER" id="PTHR43410:SF1">
    <property type="entry name" value="NITRIC OXIDE SYNTHASE"/>
    <property type="match status" value="1"/>
</dbReference>
<dbReference type="PANTHER" id="PTHR43410">
    <property type="entry name" value="NITRIC OXIDE SYNTHASE OXYGENASE"/>
    <property type="match status" value="1"/>
</dbReference>
<dbReference type="Pfam" id="PF00667">
    <property type="entry name" value="FAD_binding_1"/>
    <property type="match status" value="1"/>
</dbReference>
<dbReference type="Pfam" id="PF00258">
    <property type="entry name" value="Flavodoxin_1"/>
    <property type="match status" value="1"/>
</dbReference>
<dbReference type="Pfam" id="PF00175">
    <property type="entry name" value="NAD_binding_1"/>
    <property type="match status" value="1"/>
</dbReference>
<dbReference type="Pfam" id="PF02898">
    <property type="entry name" value="NO_synthase"/>
    <property type="match status" value="1"/>
</dbReference>
<dbReference type="PIRSF" id="PIRSF000333">
    <property type="entry name" value="NOS"/>
    <property type="match status" value="1"/>
</dbReference>
<dbReference type="PRINTS" id="PR00369">
    <property type="entry name" value="FLAVODOXIN"/>
</dbReference>
<dbReference type="PRINTS" id="PR00371">
    <property type="entry name" value="FPNCR"/>
</dbReference>
<dbReference type="SUPFAM" id="SSF52343">
    <property type="entry name" value="Ferredoxin reductase-like, C-terminal NADP-linked domain"/>
    <property type="match status" value="1"/>
</dbReference>
<dbReference type="SUPFAM" id="SSF52218">
    <property type="entry name" value="Flavoproteins"/>
    <property type="match status" value="1"/>
</dbReference>
<dbReference type="SUPFAM" id="SSF56512">
    <property type="entry name" value="Nitric oxide (NO) synthase oxygenase domain"/>
    <property type="match status" value="1"/>
</dbReference>
<dbReference type="SUPFAM" id="SSF63380">
    <property type="entry name" value="Riboflavin synthase domain-like"/>
    <property type="match status" value="1"/>
</dbReference>
<dbReference type="PROSITE" id="PS51384">
    <property type="entry name" value="FAD_FR"/>
    <property type="match status" value="1"/>
</dbReference>
<dbReference type="PROSITE" id="PS50902">
    <property type="entry name" value="FLAVODOXIN_LIKE"/>
    <property type="match status" value="1"/>
</dbReference>
<dbReference type="PROSITE" id="PS60001">
    <property type="entry name" value="NOS"/>
    <property type="match status" value="1"/>
</dbReference>
<sequence>MGNLKSVGQEPGPPCGLGLGLGLGLCGKQGPASPTSEPSRAPALAPPPSPPPAPDHSSPPLTRPPDGPKFPRVKNWEVGSITYDTLSAQSQQDGPCTPRRCLGSLVFPRKLQSRPSQNPAPPEQLLSQARDFISQYYSSIKRSGSQAHEQRLQEVEAEVAATGTYQLRESELVFGAKQAWRNAPRCVGRIQWGKLQVFDARDCSSAQEMFTYICNHIKYATNRGNLRSAITVFPQRASGRGDFRIWNSQLVRYAGYRQQDGSVRGDPANVEITELCIQHGWTPGNGRFDVLPLLLQAPDEPPELFALPPELVLEVPLEHPTLEWFAALGLRWYALPAVSNMLLEIGGLEFPAAPFSGWYMSTEIGTRNLCDPHRYNILEDVAVCMDLDTRTTSSLWKDKAAVEINLAVLHSYQLAKVTIVDHHAATASFMKHLENEQKARGGCPADWAWIVPPISGSLTPVFHQEMVNYVLSPAFRYQTDPWKGSASKGAGVTRKKTFKEVANAVKISASLMGTVMAKRVKATILYGSETGRAQSYAQQLGRLFRKAFDPRVLCMDEYDVVSLEHETLVLVVTSTFGNGDPPENGESFAAALMEMSGSYNSSPRPEQHKSYKIRFNSVSCSDPLVSSWRRKRKESRNTDSAGALGTLRFCVFGLGSRAYPHFCAFARAVDTRLEELGGERLLQLGQGDELCGQEEAFGGWAQAAFQASWETFCVGEDAKAAARDIFSPKRTWKRQRYRLSAQAEGLQLLPGLIHVHRRKMVQATVLAVENLQSSKSTRATILVRLDTGSQEALQYQPGDHIGICPPNRPGLVEALLSRVEDPPPPGEPVAVEQLEKGSPGGPPPSWVRDPRLPPCTLRQALTFFLDITSPPSPQLLRLLSTLAEESSEQQELESLSQDPRRYEEWKWFRCPTLLEVLEQFPSVALPAPLLLTQLPLLQPRYYSVSSAPSAHPGEIHLTVAVLAYRTQDGLGPLHYGVCSTWLSQLKAGDPVPCFIRGAPSFRLPPDPSLPCILVGPGTGIAPFRGFWQGRLHDIYSKGLQPAPMTLVFGCRCSQLDHLYRDEVQDAQQRGVFGRVLTAFSREPDSPKTYVQDILRTELAAEVHRVLCLERGHMFVCGDVTMATSVLQTVQRILATEGDMELDEAGDVIGVLRDQQRYHEDIFGLTLRTQEVTSRIRTQSFSLQERHLRGAVPWALDPPGPDTVGP</sequence>
<evidence type="ECO:0000250" key="1"/>
<evidence type="ECO:0000250" key="2">
    <source>
        <dbReference type="UniProtKB" id="P29473"/>
    </source>
</evidence>
<evidence type="ECO:0000250" key="3">
    <source>
        <dbReference type="UniProtKB" id="P29474"/>
    </source>
</evidence>
<evidence type="ECO:0000250" key="4">
    <source>
        <dbReference type="UniProtKB" id="P29476"/>
    </source>
</evidence>
<evidence type="ECO:0000250" key="5">
    <source>
        <dbReference type="UniProtKB" id="P35228"/>
    </source>
</evidence>
<evidence type="ECO:0000250" key="6">
    <source>
        <dbReference type="UniProtKB" id="P70313"/>
    </source>
</evidence>
<evidence type="ECO:0000255" key="7"/>
<evidence type="ECO:0000255" key="8">
    <source>
        <dbReference type="PROSITE-ProRule" id="PRU00088"/>
    </source>
</evidence>
<evidence type="ECO:0000255" key="9">
    <source>
        <dbReference type="PROSITE-ProRule" id="PRU00716"/>
    </source>
</evidence>
<evidence type="ECO:0000256" key="10">
    <source>
        <dbReference type="SAM" id="MobiDB-lite"/>
    </source>
</evidence>
<evidence type="ECO:0000305" key="11"/>
<comment type="function">
    <text evidence="3">Produces nitric oxide (NO) which is implicated in vascular smooth muscle relaxation through a cGMP-mediated signal transduction pathway. NO mediates vascular endothelial growth factor (VEGF)-induced angiogenesis in coronary vessels and promotes blood clotting through the activation of platelets (By similarity).</text>
</comment>
<comment type="catalytic activity">
    <reaction evidence="3">
        <text>2 L-arginine + 3 NADPH + 4 O2 + H(+) = 2 L-citrulline + 2 nitric oxide + 3 NADP(+) + 4 H2O</text>
        <dbReference type="Rhea" id="RHEA:19897"/>
        <dbReference type="ChEBI" id="CHEBI:15377"/>
        <dbReference type="ChEBI" id="CHEBI:15378"/>
        <dbReference type="ChEBI" id="CHEBI:15379"/>
        <dbReference type="ChEBI" id="CHEBI:16480"/>
        <dbReference type="ChEBI" id="CHEBI:32682"/>
        <dbReference type="ChEBI" id="CHEBI:57743"/>
        <dbReference type="ChEBI" id="CHEBI:57783"/>
        <dbReference type="ChEBI" id="CHEBI:58349"/>
        <dbReference type="EC" id="1.14.13.39"/>
    </reaction>
    <physiologicalReaction direction="left-to-right" evidence="3">
        <dbReference type="Rhea" id="RHEA:19898"/>
    </physiologicalReaction>
</comment>
<comment type="cofactor">
    <cofactor evidence="3">
        <name>heme b</name>
        <dbReference type="ChEBI" id="CHEBI:60344"/>
    </cofactor>
</comment>
<comment type="cofactor">
    <cofactor evidence="4">
        <name>FAD</name>
        <dbReference type="ChEBI" id="CHEBI:57692"/>
    </cofactor>
    <text evidence="4">Binds 1 FAD.</text>
</comment>
<comment type="cofactor">
    <cofactor evidence="5">
        <name>FMN</name>
        <dbReference type="ChEBI" id="CHEBI:58210"/>
    </cofactor>
    <text evidence="5">Binds 1 FMN.</text>
</comment>
<comment type="cofactor">
    <cofactor evidence="5">
        <name>(6R)-L-erythro-5,6,7,8-tetrahydrobiopterin</name>
        <dbReference type="ChEBI" id="CHEBI:59560"/>
    </cofactor>
    <text evidence="5">Tetrahydrobiopterin (BH4). May stabilize the dimeric form of the enzyme.</text>
</comment>
<comment type="activity regulation">
    <text evidence="1">Stimulated by calcium/calmodulin. Inhibited by NOSIP and NOSTRIN (By similarity).</text>
</comment>
<comment type="subunit">
    <text evidence="3 6">Homodimer. Interacts with NOSIP and NOSTRIN (By similarity). Interacts with HSP90AB1 (By similarity). Forms a complex with ASL, ASS1 and SLC7A1; the complex regulates cell-autonomous L-arginine synthesis and citrulline recycling while channeling extracellular L-arginine to nitric oxide synthesis pathway (By similarity).</text>
</comment>
<comment type="subcellular location">
    <subcellularLocation>
        <location evidence="1">Membrane</location>
        <location evidence="1">Caveola</location>
    </subcellularLocation>
    <subcellularLocation>
        <location evidence="1">Cytoplasm</location>
        <location evidence="1">Cytoskeleton</location>
    </subcellularLocation>
    <subcellularLocation>
        <location evidence="1">Golgi apparatus</location>
    </subcellularLocation>
    <subcellularLocation>
        <location evidence="1">Cell membrane</location>
    </subcellularLocation>
    <text evidence="1">Specifically associates with actin cytoskeleton in the G2 phase of the cell cycle, which is favored by interaction with NOSIP and results in a reduced enzymatic activity.</text>
</comment>
<comment type="PTM">
    <text evidence="1">Phosphorylation by AMPK at Ser-1179 in the presence of Ca(2+)-calmodulin (CaM) activates activity. In absence of Ca(2+)-calmodulin, AMPK also phosphorylates Thr-497, resulting in inhibition of activity. Phosphorylation of Ser-116 by CDK5 reduces activity (By similarity).</text>
</comment>
<comment type="similarity">
    <text evidence="11">Belongs to the NOS family.</text>
</comment>
<feature type="initiator methionine" description="Removed" evidence="2">
    <location>
        <position position="1"/>
    </location>
</feature>
<feature type="chain" id="PRO_0000289580" description="Nitric oxide synthase 3">
    <location>
        <begin position="2"/>
        <end position="1205"/>
    </location>
</feature>
<feature type="domain" description="Flavodoxin-like" evidence="8">
    <location>
        <begin position="522"/>
        <end position="705"/>
    </location>
</feature>
<feature type="domain" description="FAD-binding FR-type" evidence="9">
    <location>
        <begin position="758"/>
        <end position="1004"/>
    </location>
</feature>
<feature type="region of interest" description="Disordered" evidence="10">
    <location>
        <begin position="1"/>
        <end position="73"/>
    </location>
</feature>
<feature type="region of interest" description="Interaction with NOSIP" evidence="1">
    <location>
        <begin position="100"/>
        <end position="488"/>
    </location>
</feature>
<feature type="region of interest" description="Calmodulin-binding" evidence="7">
    <location>
        <begin position="492"/>
        <end position="512"/>
    </location>
</feature>
<feature type="region of interest" description="Disordered" evidence="10">
    <location>
        <begin position="819"/>
        <end position="850"/>
    </location>
</feature>
<feature type="compositionally biased region" description="Gly residues" evidence="10">
    <location>
        <begin position="15"/>
        <end position="27"/>
    </location>
</feature>
<feature type="compositionally biased region" description="Pro residues" evidence="10">
    <location>
        <begin position="44"/>
        <end position="54"/>
    </location>
</feature>
<feature type="binding site" evidence="5">
    <location>
        <position position="96"/>
    </location>
    <ligand>
        <name>Zn(2+)</name>
        <dbReference type="ChEBI" id="CHEBI:29105"/>
        <note>ligand shared between homodimeric partners</note>
    </ligand>
</feature>
<feature type="binding site" evidence="5">
    <location>
        <position position="101"/>
    </location>
    <ligand>
        <name>Zn(2+)</name>
        <dbReference type="ChEBI" id="CHEBI:29105"/>
        <note>ligand shared between homodimeric partners</note>
    </ligand>
</feature>
<feature type="binding site" evidence="3">
    <location>
        <position position="104"/>
    </location>
    <ligand>
        <name>(6R)-L-erythro-5,6,7,8-tetrahydrobiopterin</name>
        <dbReference type="ChEBI" id="CHEBI:59560"/>
    </ligand>
</feature>
<feature type="binding site" description="axial binding residue" evidence="3">
    <location>
        <position position="186"/>
    </location>
    <ligand>
        <name>heme b</name>
        <dbReference type="ChEBI" id="CHEBI:60344"/>
    </ligand>
    <ligandPart>
        <name>Fe</name>
        <dbReference type="ChEBI" id="CHEBI:18248"/>
    </ligandPart>
</feature>
<feature type="binding site" evidence="3">
    <location>
        <position position="249"/>
    </location>
    <ligand>
        <name>L-arginine</name>
        <dbReference type="ChEBI" id="CHEBI:32682"/>
    </ligand>
</feature>
<feature type="binding site" evidence="3">
    <location>
        <position position="358"/>
    </location>
    <ligand>
        <name>L-arginine</name>
        <dbReference type="ChEBI" id="CHEBI:32682"/>
    </ligand>
</feature>
<feature type="binding site" evidence="3">
    <location>
        <position position="359"/>
    </location>
    <ligand>
        <name>L-arginine</name>
        <dbReference type="ChEBI" id="CHEBI:32682"/>
    </ligand>
</feature>
<feature type="binding site" evidence="3">
    <location>
        <position position="363"/>
    </location>
    <ligand>
        <name>L-arginine</name>
        <dbReference type="ChEBI" id="CHEBI:32682"/>
    </ligand>
</feature>
<feature type="binding site" evidence="3">
    <location>
        <position position="368"/>
    </location>
    <ligand>
        <name>L-arginine</name>
        <dbReference type="ChEBI" id="CHEBI:32682"/>
    </ligand>
</feature>
<feature type="binding site" evidence="3">
    <location>
        <position position="448"/>
    </location>
    <ligand>
        <name>(6R)-L-erythro-5,6,7,8-tetrahydrobiopterin</name>
        <dbReference type="ChEBI" id="CHEBI:59560"/>
    </ligand>
</feature>
<feature type="binding site" evidence="3">
    <location>
        <position position="449"/>
    </location>
    <ligand>
        <name>(6R)-L-erythro-5,6,7,8-tetrahydrobiopterin</name>
        <dbReference type="ChEBI" id="CHEBI:59560"/>
    </ligand>
</feature>
<feature type="binding site" evidence="3">
    <location>
        <position position="462"/>
    </location>
    <ligand>
        <name>(6R)-L-erythro-5,6,7,8-tetrahydrobiopterin</name>
        <dbReference type="ChEBI" id="CHEBI:59560"/>
    </ligand>
</feature>
<feature type="binding site" evidence="3">
    <location>
        <position position="477"/>
    </location>
    <ligand>
        <name>heme b</name>
        <dbReference type="ChEBI" id="CHEBI:60344"/>
    </ligand>
</feature>
<feature type="binding site" evidence="5">
    <location>
        <position position="528"/>
    </location>
    <ligand>
        <name>FMN</name>
        <dbReference type="ChEBI" id="CHEBI:58210"/>
    </ligand>
</feature>
<feature type="binding site" evidence="5">
    <location>
        <position position="529"/>
    </location>
    <ligand>
        <name>FMN</name>
        <dbReference type="ChEBI" id="CHEBI:58210"/>
    </ligand>
</feature>
<feature type="binding site" evidence="5">
    <location>
        <position position="530"/>
    </location>
    <ligand>
        <name>FMN</name>
        <dbReference type="ChEBI" id="CHEBI:58210"/>
    </ligand>
</feature>
<feature type="binding site" evidence="5">
    <location>
        <position position="532"/>
    </location>
    <ligand>
        <name>FMN</name>
        <dbReference type="ChEBI" id="CHEBI:58210"/>
    </ligand>
</feature>
<feature type="binding site" evidence="5">
    <location>
        <position position="574"/>
    </location>
    <ligand>
        <name>FMN</name>
        <dbReference type="ChEBI" id="CHEBI:58210"/>
    </ligand>
</feature>
<feature type="binding site" evidence="5">
    <location>
        <position position="575"/>
    </location>
    <ligand>
        <name>FMN</name>
        <dbReference type="ChEBI" id="CHEBI:58210"/>
    </ligand>
</feature>
<feature type="binding site" evidence="5">
    <location>
        <position position="656"/>
    </location>
    <ligand>
        <name>FMN</name>
        <dbReference type="ChEBI" id="CHEBI:58210"/>
    </ligand>
</feature>
<feature type="binding site" evidence="5">
    <location>
        <position position="663"/>
    </location>
    <ligand>
        <name>FMN</name>
        <dbReference type="ChEBI" id="CHEBI:58210"/>
    </ligand>
</feature>
<feature type="binding site" evidence="5">
    <location>
        <position position="689"/>
    </location>
    <ligand>
        <name>FMN</name>
        <dbReference type="ChEBI" id="CHEBI:58210"/>
    </ligand>
</feature>
<feature type="binding site" evidence="5">
    <location>
        <position position="693"/>
    </location>
    <ligand>
        <name>FMN</name>
        <dbReference type="ChEBI" id="CHEBI:58210"/>
    </ligand>
</feature>
<feature type="binding site" evidence="4">
    <location>
        <position position="778"/>
    </location>
    <ligand>
        <name>NADP(+)</name>
        <dbReference type="ChEBI" id="CHEBI:58349"/>
    </ligand>
</feature>
<feature type="binding site" evidence="4">
    <location>
        <position position="800"/>
    </location>
    <ligand>
        <name>FAD</name>
        <dbReference type="ChEBI" id="CHEBI:57692"/>
    </ligand>
</feature>
<feature type="binding site" evidence="4">
    <location>
        <position position="940"/>
    </location>
    <ligand>
        <name>FAD</name>
        <dbReference type="ChEBI" id="CHEBI:57692"/>
    </ligand>
</feature>
<feature type="binding site" evidence="4">
    <location>
        <position position="942"/>
    </location>
    <ligand>
        <name>FAD</name>
        <dbReference type="ChEBI" id="CHEBI:57692"/>
    </ligand>
</feature>
<feature type="binding site" evidence="4">
    <location>
        <position position="943"/>
    </location>
    <ligand>
        <name>FAD</name>
        <dbReference type="ChEBI" id="CHEBI:57692"/>
    </ligand>
</feature>
<feature type="binding site" evidence="4">
    <location>
        <position position="958"/>
    </location>
    <ligand>
        <name>FAD</name>
        <dbReference type="ChEBI" id="CHEBI:57692"/>
    </ligand>
</feature>
<feature type="binding site" evidence="4">
    <location>
        <position position="960"/>
    </location>
    <ligand>
        <name>FAD</name>
        <dbReference type="ChEBI" id="CHEBI:57692"/>
    </ligand>
</feature>
<feature type="binding site" evidence="4">
    <location>
        <position position="964"/>
    </location>
    <ligand>
        <name>FAD</name>
        <dbReference type="ChEBI" id="CHEBI:57692"/>
    </ligand>
</feature>
<feature type="binding site" evidence="4">
    <location>
        <position position="977"/>
    </location>
    <ligand>
        <name>FAD</name>
        <dbReference type="ChEBI" id="CHEBI:57692"/>
    </ligand>
</feature>
<feature type="binding site" evidence="4">
    <location>
        <position position="978"/>
    </location>
    <ligand>
        <name>FAD</name>
        <dbReference type="ChEBI" id="CHEBI:57692"/>
    </ligand>
</feature>
<feature type="binding site" evidence="4">
    <location>
        <position position="979"/>
    </location>
    <ligand>
        <name>FAD</name>
        <dbReference type="ChEBI" id="CHEBI:57692"/>
    </ligand>
</feature>
<feature type="binding site" evidence="4">
    <location>
        <position position="1018"/>
    </location>
    <ligand>
        <name>NADP(+)</name>
        <dbReference type="ChEBI" id="CHEBI:58349"/>
    </ligand>
</feature>
<feature type="binding site" evidence="4">
    <location>
        <position position="1051"/>
    </location>
    <ligand>
        <name>NADP(+)</name>
        <dbReference type="ChEBI" id="CHEBI:58349"/>
    </ligand>
</feature>
<feature type="binding site" evidence="4">
    <location>
        <position position="1080"/>
    </location>
    <ligand>
        <name>NADP(+)</name>
        <dbReference type="ChEBI" id="CHEBI:58349"/>
    </ligand>
</feature>
<feature type="binding site" evidence="4">
    <location>
        <position position="1081"/>
    </location>
    <ligand>
        <name>NADP(+)</name>
        <dbReference type="ChEBI" id="CHEBI:58349"/>
    </ligand>
</feature>
<feature type="binding site" evidence="4">
    <location>
        <position position="1087"/>
    </location>
    <ligand>
        <name>NADP(+)</name>
        <dbReference type="ChEBI" id="CHEBI:58349"/>
    </ligand>
</feature>
<feature type="binding site" evidence="4">
    <location>
        <position position="1089"/>
    </location>
    <ligand>
        <name>NADP(+)</name>
        <dbReference type="ChEBI" id="CHEBI:58349"/>
    </ligand>
</feature>
<feature type="binding site" evidence="4">
    <location>
        <position position="1091"/>
    </location>
    <ligand>
        <name>NADP(+)</name>
        <dbReference type="ChEBI" id="CHEBI:58349"/>
    </ligand>
</feature>
<feature type="modified residue" description="Phosphoserine; by CDK5" evidence="3">
    <location>
        <position position="116"/>
    </location>
</feature>
<feature type="modified residue" description="Phosphothreonine; by AMPK" evidence="2">
    <location>
        <position position="497"/>
    </location>
</feature>
<feature type="modified residue" description="Phosphoserine" evidence="6">
    <location>
        <position position="617"/>
    </location>
</feature>
<feature type="modified residue" description="Phosphoserine" evidence="2">
    <location>
        <position position="635"/>
    </location>
</feature>
<feature type="modified residue" description="Phosphoserine" evidence="3">
    <location>
        <position position="640"/>
    </location>
</feature>
<feature type="modified residue" description="Phosphoserine" evidence="3">
    <location>
        <position position="838"/>
    </location>
</feature>
<feature type="modified residue" description="Phosphothreonine" evidence="6">
    <location>
        <position position="1177"/>
    </location>
</feature>
<feature type="modified residue" description="Phosphoserine; by AMPK" evidence="2">
    <location>
        <position position="1179"/>
    </location>
</feature>
<feature type="modified residue" description="Phosphoserine" evidence="6">
    <location>
        <position position="1181"/>
    </location>
</feature>
<feature type="lipid moiety-binding region" description="N-myristoyl glycine" evidence="1">
    <location>
        <position position="2"/>
    </location>
</feature>
<feature type="lipid moiety-binding region" description="S-palmitoyl cysteine" evidence="1">
    <location>
        <position position="15"/>
    </location>
</feature>
<feature type="lipid moiety-binding region" description="S-palmitoyl cysteine" evidence="1">
    <location>
        <position position="26"/>
    </location>
</feature>
<organism>
    <name type="scientific">Canis lupus familiaris</name>
    <name type="common">Dog</name>
    <name type="synonym">Canis familiaris</name>
    <dbReference type="NCBI Taxonomy" id="9615"/>
    <lineage>
        <taxon>Eukaryota</taxon>
        <taxon>Metazoa</taxon>
        <taxon>Chordata</taxon>
        <taxon>Craniata</taxon>
        <taxon>Vertebrata</taxon>
        <taxon>Euteleostomi</taxon>
        <taxon>Mammalia</taxon>
        <taxon>Eutheria</taxon>
        <taxon>Laurasiatheria</taxon>
        <taxon>Carnivora</taxon>
        <taxon>Caniformia</taxon>
        <taxon>Canidae</taxon>
        <taxon>Canis</taxon>
    </lineage>
</organism>